<sequence>MPRVKRGVTARARHKKVLKLAKGYYGARSRTYRVAVQAVTKAGQYAYRDRRQKKRQFRQLWIARINAAARQNGLSYSRFINGLKKASIEIDRKILADIAVFDKVVFATLVEKAKEALN</sequence>
<comment type="function">
    <text evidence="1">Binds directly to 23S ribosomal RNA and is necessary for the in vitro assembly process of the 50S ribosomal subunit. It is not involved in the protein synthesizing functions of that subunit.</text>
</comment>
<comment type="similarity">
    <text evidence="1">Belongs to the bacterial ribosomal protein bL20 family.</text>
</comment>
<reference key="1">
    <citation type="submission" date="2006-12" db="EMBL/GenBank/DDBJ databases">
        <title>Complete sequence of Shewanella sp. W3-18-1.</title>
        <authorList>
            <consortium name="US DOE Joint Genome Institute"/>
            <person name="Copeland A."/>
            <person name="Lucas S."/>
            <person name="Lapidus A."/>
            <person name="Barry K."/>
            <person name="Detter J.C."/>
            <person name="Glavina del Rio T."/>
            <person name="Hammon N."/>
            <person name="Israni S."/>
            <person name="Dalin E."/>
            <person name="Tice H."/>
            <person name="Pitluck S."/>
            <person name="Chain P."/>
            <person name="Malfatti S."/>
            <person name="Shin M."/>
            <person name="Vergez L."/>
            <person name="Schmutz J."/>
            <person name="Larimer F."/>
            <person name="Land M."/>
            <person name="Hauser L."/>
            <person name="Kyrpides N."/>
            <person name="Lykidis A."/>
            <person name="Tiedje J."/>
            <person name="Richardson P."/>
        </authorList>
    </citation>
    <scope>NUCLEOTIDE SEQUENCE [LARGE SCALE GENOMIC DNA]</scope>
    <source>
        <strain>W3-18-1</strain>
    </source>
</reference>
<organism>
    <name type="scientific">Shewanella sp. (strain W3-18-1)</name>
    <dbReference type="NCBI Taxonomy" id="351745"/>
    <lineage>
        <taxon>Bacteria</taxon>
        <taxon>Pseudomonadati</taxon>
        <taxon>Pseudomonadota</taxon>
        <taxon>Gammaproteobacteria</taxon>
        <taxon>Alteromonadales</taxon>
        <taxon>Shewanellaceae</taxon>
        <taxon>Shewanella</taxon>
    </lineage>
</organism>
<evidence type="ECO:0000255" key="1">
    <source>
        <dbReference type="HAMAP-Rule" id="MF_00382"/>
    </source>
</evidence>
<evidence type="ECO:0000305" key="2"/>
<feature type="chain" id="PRO_1000049073" description="Large ribosomal subunit protein bL20">
    <location>
        <begin position="1"/>
        <end position="118"/>
    </location>
</feature>
<proteinExistence type="inferred from homology"/>
<gene>
    <name evidence="1" type="primary">rplT</name>
    <name type="ordered locus">Sputw3181_1997</name>
</gene>
<protein>
    <recommendedName>
        <fullName evidence="1">Large ribosomal subunit protein bL20</fullName>
    </recommendedName>
    <alternativeName>
        <fullName evidence="2">50S ribosomal protein L20</fullName>
    </alternativeName>
</protein>
<accession>A1RJI6</accession>
<name>RL20_SHESW</name>
<dbReference type="EMBL" id="CP000503">
    <property type="protein sequence ID" value="ABM24831.1"/>
    <property type="molecule type" value="Genomic_DNA"/>
</dbReference>
<dbReference type="RefSeq" id="WP_006081652.1">
    <property type="nucleotide sequence ID" value="NC_008750.1"/>
</dbReference>
<dbReference type="SMR" id="A1RJI6"/>
<dbReference type="GeneID" id="94727990"/>
<dbReference type="KEGG" id="shw:Sputw3181_1997"/>
<dbReference type="HOGENOM" id="CLU_123265_0_1_6"/>
<dbReference type="Proteomes" id="UP000002597">
    <property type="component" value="Chromosome"/>
</dbReference>
<dbReference type="GO" id="GO:1990904">
    <property type="term" value="C:ribonucleoprotein complex"/>
    <property type="evidence" value="ECO:0007669"/>
    <property type="project" value="UniProtKB-KW"/>
</dbReference>
<dbReference type="GO" id="GO:0005840">
    <property type="term" value="C:ribosome"/>
    <property type="evidence" value="ECO:0007669"/>
    <property type="project" value="UniProtKB-KW"/>
</dbReference>
<dbReference type="GO" id="GO:0019843">
    <property type="term" value="F:rRNA binding"/>
    <property type="evidence" value="ECO:0007669"/>
    <property type="project" value="UniProtKB-UniRule"/>
</dbReference>
<dbReference type="GO" id="GO:0003735">
    <property type="term" value="F:structural constituent of ribosome"/>
    <property type="evidence" value="ECO:0007669"/>
    <property type="project" value="InterPro"/>
</dbReference>
<dbReference type="GO" id="GO:0000027">
    <property type="term" value="P:ribosomal large subunit assembly"/>
    <property type="evidence" value="ECO:0007669"/>
    <property type="project" value="UniProtKB-UniRule"/>
</dbReference>
<dbReference type="GO" id="GO:0006412">
    <property type="term" value="P:translation"/>
    <property type="evidence" value="ECO:0007669"/>
    <property type="project" value="InterPro"/>
</dbReference>
<dbReference type="CDD" id="cd07026">
    <property type="entry name" value="Ribosomal_L20"/>
    <property type="match status" value="1"/>
</dbReference>
<dbReference type="FunFam" id="1.10.1900.20:FF:000001">
    <property type="entry name" value="50S ribosomal protein L20"/>
    <property type="match status" value="1"/>
</dbReference>
<dbReference type="Gene3D" id="6.10.160.10">
    <property type="match status" value="1"/>
</dbReference>
<dbReference type="Gene3D" id="1.10.1900.20">
    <property type="entry name" value="Ribosomal protein L20"/>
    <property type="match status" value="1"/>
</dbReference>
<dbReference type="HAMAP" id="MF_00382">
    <property type="entry name" value="Ribosomal_bL20"/>
    <property type="match status" value="1"/>
</dbReference>
<dbReference type="InterPro" id="IPR005813">
    <property type="entry name" value="Ribosomal_bL20"/>
</dbReference>
<dbReference type="InterPro" id="IPR049946">
    <property type="entry name" value="RIBOSOMAL_L20_CS"/>
</dbReference>
<dbReference type="InterPro" id="IPR035566">
    <property type="entry name" value="Ribosomal_protein_bL20_C"/>
</dbReference>
<dbReference type="NCBIfam" id="TIGR01032">
    <property type="entry name" value="rplT_bact"/>
    <property type="match status" value="1"/>
</dbReference>
<dbReference type="PANTHER" id="PTHR10986">
    <property type="entry name" value="39S RIBOSOMAL PROTEIN L20"/>
    <property type="match status" value="1"/>
</dbReference>
<dbReference type="Pfam" id="PF00453">
    <property type="entry name" value="Ribosomal_L20"/>
    <property type="match status" value="1"/>
</dbReference>
<dbReference type="PRINTS" id="PR00062">
    <property type="entry name" value="RIBOSOMALL20"/>
</dbReference>
<dbReference type="SUPFAM" id="SSF74731">
    <property type="entry name" value="Ribosomal protein L20"/>
    <property type="match status" value="1"/>
</dbReference>
<dbReference type="PROSITE" id="PS00937">
    <property type="entry name" value="RIBOSOMAL_L20"/>
    <property type="match status" value="1"/>
</dbReference>
<keyword id="KW-0687">Ribonucleoprotein</keyword>
<keyword id="KW-0689">Ribosomal protein</keyword>
<keyword id="KW-0694">RNA-binding</keyword>
<keyword id="KW-0699">rRNA-binding</keyword>